<evidence type="ECO:0000255" key="1">
    <source>
        <dbReference type="HAMAP-Rule" id="MF_01357"/>
    </source>
</evidence>
<protein>
    <recommendedName>
        <fullName evidence="1">NADH-quinone oxidoreductase subunit C</fullName>
        <ecNumber evidence="1">7.1.1.-</ecNumber>
    </recommendedName>
    <alternativeName>
        <fullName evidence="1">NADH dehydrogenase I subunit C</fullName>
    </alternativeName>
    <alternativeName>
        <fullName evidence="1">NDH-1 subunit C</fullName>
    </alternativeName>
</protein>
<feature type="chain" id="PRO_0000358118" description="NADH-quinone oxidoreductase subunit C">
    <location>
        <begin position="1"/>
        <end position="227"/>
    </location>
</feature>
<comment type="function">
    <text evidence="1">NDH-1 shuttles electrons from NADH, via FMN and iron-sulfur (Fe-S) centers, to quinones in the respiratory chain. The immediate electron acceptor for the enzyme in this species is believed to be ubiquinone. Couples the redox reaction to proton translocation (for every two electrons transferred, four hydrogen ions are translocated across the cytoplasmic membrane), and thus conserves the redox energy in a proton gradient.</text>
</comment>
<comment type="catalytic activity">
    <reaction evidence="1">
        <text>a quinone + NADH + 5 H(+)(in) = a quinol + NAD(+) + 4 H(+)(out)</text>
        <dbReference type="Rhea" id="RHEA:57888"/>
        <dbReference type="ChEBI" id="CHEBI:15378"/>
        <dbReference type="ChEBI" id="CHEBI:24646"/>
        <dbReference type="ChEBI" id="CHEBI:57540"/>
        <dbReference type="ChEBI" id="CHEBI:57945"/>
        <dbReference type="ChEBI" id="CHEBI:132124"/>
    </reaction>
</comment>
<comment type="subunit">
    <text evidence="1">NDH-1 is composed of 14 different subunits. Subunits NuoB, C, D, E, F, and G constitute the peripheral sector of the complex.</text>
</comment>
<comment type="subcellular location">
    <subcellularLocation>
        <location evidence="1">Cell inner membrane</location>
        <topology evidence="1">Peripheral membrane protein</topology>
        <orientation evidence="1">Cytoplasmic side</orientation>
    </subcellularLocation>
</comment>
<comment type="similarity">
    <text evidence="1">Belongs to the complex I 30 kDa subunit family.</text>
</comment>
<accession>Q5ZRU0</accession>
<gene>
    <name evidence="1" type="primary">nuoC</name>
    <name type="ordered locus">lpg2787</name>
</gene>
<proteinExistence type="inferred from homology"/>
<name>NUOC_LEGPH</name>
<sequence>MTKNEYLIEKLQADLANHITELTSAYGEVTIECEVQNLLPVMIELRDREEFSFDQLIDLCGVDYLHYGDYDWETESATEHGFSRGVERQEAKAYAVNKPRFAVVYHLLSTKKNHRLRVKLFVEESHLIVPSVHHLWKSANWFEREAYDLYGILFDGHPDLRRLLTDYGFIGHPFRKDFPLSGEVEMRYDAKLQKVIYAPVDIVPRIVVPKVIRNDNRYIGNEGSKND</sequence>
<dbReference type="EC" id="7.1.1.-" evidence="1"/>
<dbReference type="EMBL" id="AE017354">
    <property type="protein sequence ID" value="AAU28837.1"/>
    <property type="molecule type" value="Genomic_DNA"/>
</dbReference>
<dbReference type="RefSeq" id="WP_010948476.1">
    <property type="nucleotide sequence ID" value="NC_002942.5"/>
</dbReference>
<dbReference type="RefSeq" id="YP_096784.1">
    <property type="nucleotide sequence ID" value="NC_002942.5"/>
</dbReference>
<dbReference type="SMR" id="Q5ZRU0"/>
<dbReference type="STRING" id="272624.lpg2787"/>
<dbReference type="PaxDb" id="272624-lpg2787"/>
<dbReference type="KEGG" id="lpn:lpg2787"/>
<dbReference type="PATRIC" id="fig|272624.6.peg.2968"/>
<dbReference type="eggNOG" id="COG0852">
    <property type="taxonomic scope" value="Bacteria"/>
</dbReference>
<dbReference type="HOGENOM" id="CLU_042628_2_1_6"/>
<dbReference type="OrthoDB" id="9803286at2"/>
<dbReference type="Proteomes" id="UP000000609">
    <property type="component" value="Chromosome"/>
</dbReference>
<dbReference type="GO" id="GO:0005886">
    <property type="term" value="C:plasma membrane"/>
    <property type="evidence" value="ECO:0007669"/>
    <property type="project" value="UniProtKB-SubCell"/>
</dbReference>
<dbReference type="GO" id="GO:0008137">
    <property type="term" value="F:NADH dehydrogenase (ubiquinone) activity"/>
    <property type="evidence" value="ECO:0007669"/>
    <property type="project" value="InterPro"/>
</dbReference>
<dbReference type="GO" id="GO:0050136">
    <property type="term" value="F:NADH:ubiquinone reductase (non-electrogenic) activity"/>
    <property type="evidence" value="ECO:0007669"/>
    <property type="project" value="UniProtKB-UniRule"/>
</dbReference>
<dbReference type="GO" id="GO:0048038">
    <property type="term" value="F:quinone binding"/>
    <property type="evidence" value="ECO:0007669"/>
    <property type="project" value="UniProtKB-KW"/>
</dbReference>
<dbReference type="Gene3D" id="3.30.460.80">
    <property type="entry name" value="NADH:ubiquinone oxidoreductase, 30kDa subunit"/>
    <property type="match status" value="1"/>
</dbReference>
<dbReference type="HAMAP" id="MF_01357">
    <property type="entry name" value="NDH1_NuoC"/>
    <property type="match status" value="1"/>
</dbReference>
<dbReference type="InterPro" id="IPR010218">
    <property type="entry name" value="NADH_DH_suC"/>
</dbReference>
<dbReference type="InterPro" id="IPR037232">
    <property type="entry name" value="NADH_quin_OxRdtase_su_C/D-like"/>
</dbReference>
<dbReference type="InterPro" id="IPR001268">
    <property type="entry name" value="NADH_UbQ_OxRdtase_30kDa_su"/>
</dbReference>
<dbReference type="InterPro" id="IPR020396">
    <property type="entry name" value="NADH_UbQ_OxRdtase_CS"/>
</dbReference>
<dbReference type="NCBIfam" id="TIGR01961">
    <property type="entry name" value="NuoC_fam"/>
    <property type="match status" value="1"/>
</dbReference>
<dbReference type="NCBIfam" id="NF004730">
    <property type="entry name" value="PRK06074.1-1"/>
    <property type="match status" value="1"/>
</dbReference>
<dbReference type="PANTHER" id="PTHR10884:SF14">
    <property type="entry name" value="NADH DEHYDROGENASE [UBIQUINONE] IRON-SULFUR PROTEIN 3, MITOCHONDRIAL"/>
    <property type="match status" value="1"/>
</dbReference>
<dbReference type="PANTHER" id="PTHR10884">
    <property type="entry name" value="NADH DEHYDROGENASE UBIQUINONE IRON-SULFUR PROTEIN 3"/>
    <property type="match status" value="1"/>
</dbReference>
<dbReference type="Pfam" id="PF00329">
    <property type="entry name" value="Complex1_30kDa"/>
    <property type="match status" value="1"/>
</dbReference>
<dbReference type="SUPFAM" id="SSF143243">
    <property type="entry name" value="Nqo5-like"/>
    <property type="match status" value="1"/>
</dbReference>
<dbReference type="PROSITE" id="PS00542">
    <property type="entry name" value="COMPLEX1_30K"/>
    <property type="match status" value="1"/>
</dbReference>
<keyword id="KW-0997">Cell inner membrane</keyword>
<keyword id="KW-1003">Cell membrane</keyword>
<keyword id="KW-0472">Membrane</keyword>
<keyword id="KW-0520">NAD</keyword>
<keyword id="KW-0874">Quinone</keyword>
<keyword id="KW-1185">Reference proteome</keyword>
<keyword id="KW-1278">Translocase</keyword>
<keyword id="KW-0813">Transport</keyword>
<keyword id="KW-0830">Ubiquinone</keyword>
<organism>
    <name type="scientific">Legionella pneumophila subsp. pneumophila (strain Philadelphia 1 / ATCC 33152 / DSM 7513)</name>
    <dbReference type="NCBI Taxonomy" id="272624"/>
    <lineage>
        <taxon>Bacteria</taxon>
        <taxon>Pseudomonadati</taxon>
        <taxon>Pseudomonadota</taxon>
        <taxon>Gammaproteobacteria</taxon>
        <taxon>Legionellales</taxon>
        <taxon>Legionellaceae</taxon>
        <taxon>Legionella</taxon>
    </lineage>
</organism>
<reference key="1">
    <citation type="journal article" date="2004" name="Science">
        <title>The genomic sequence of the accidental pathogen Legionella pneumophila.</title>
        <authorList>
            <person name="Chien M."/>
            <person name="Morozova I."/>
            <person name="Shi S."/>
            <person name="Sheng H."/>
            <person name="Chen J."/>
            <person name="Gomez S.M."/>
            <person name="Asamani G."/>
            <person name="Hill K."/>
            <person name="Nuara J."/>
            <person name="Feder M."/>
            <person name="Rineer J."/>
            <person name="Greenberg J.J."/>
            <person name="Steshenko V."/>
            <person name="Park S.H."/>
            <person name="Zhao B."/>
            <person name="Teplitskaya E."/>
            <person name="Edwards J.R."/>
            <person name="Pampou S."/>
            <person name="Georghiou A."/>
            <person name="Chou I.-C."/>
            <person name="Iannuccilli W."/>
            <person name="Ulz M.E."/>
            <person name="Kim D.H."/>
            <person name="Geringer-Sameth A."/>
            <person name="Goldsberry C."/>
            <person name="Morozov P."/>
            <person name="Fischer S.G."/>
            <person name="Segal G."/>
            <person name="Qu X."/>
            <person name="Rzhetsky A."/>
            <person name="Zhang P."/>
            <person name="Cayanis E."/>
            <person name="De Jong P.J."/>
            <person name="Ju J."/>
            <person name="Kalachikov S."/>
            <person name="Shuman H.A."/>
            <person name="Russo J.J."/>
        </authorList>
    </citation>
    <scope>NUCLEOTIDE SEQUENCE [LARGE SCALE GENOMIC DNA]</scope>
    <source>
        <strain>Philadelphia 1 / ATCC 33152 / DSM 7513</strain>
    </source>
</reference>